<evidence type="ECO:0000250" key="1"/>
<evidence type="ECO:0000255" key="2">
    <source>
        <dbReference type="PROSITE-ProRule" id="PRU00214"/>
    </source>
</evidence>
<evidence type="ECO:0000305" key="3"/>
<protein>
    <recommendedName>
        <fullName>Ubiquitin</fullName>
    </recommendedName>
</protein>
<proteinExistence type="evidence at protein level"/>
<reference key="1">
    <citation type="journal article" date="1986" name="Biochemistry">
        <title>Complete amino acid sequence of ubiquitin from the higher plant Avena sativa.</title>
        <authorList>
            <person name="Vierstra R.D."/>
            <person name="Langan S.M."/>
            <person name="Schaller G.E."/>
        </authorList>
    </citation>
    <scope>PROTEIN SEQUENCE</scope>
</reference>
<keyword id="KW-0963">Cytoplasm</keyword>
<keyword id="KW-0903">Direct protein sequencing</keyword>
<keyword id="KW-1017">Isopeptide bond</keyword>
<keyword id="KW-0539">Nucleus</keyword>
<keyword id="KW-0832">Ubl conjugation</keyword>
<sequence>MQIFVKTLTGKTITLEVESSDTIDNVKAKIQDKEGIPPDQQRLIFAGKQLEDGRTLADYNIQKESTLHLVLRLRGG</sequence>
<accession>P69310</accession>
<accession>O82079</accession>
<accession>P03993</accession>
<dbReference type="PIR" id="A02576">
    <property type="entry name" value="UQOA"/>
</dbReference>
<dbReference type="SMR" id="P69310"/>
<dbReference type="GO" id="GO:0005737">
    <property type="term" value="C:cytoplasm"/>
    <property type="evidence" value="ECO:0007669"/>
    <property type="project" value="UniProtKB-SubCell"/>
</dbReference>
<dbReference type="GO" id="GO:0005634">
    <property type="term" value="C:nucleus"/>
    <property type="evidence" value="ECO:0007669"/>
    <property type="project" value="UniProtKB-SubCell"/>
</dbReference>
<dbReference type="GO" id="GO:0003729">
    <property type="term" value="F:mRNA binding"/>
    <property type="evidence" value="ECO:0007669"/>
    <property type="project" value="UniProtKB-ARBA"/>
</dbReference>
<dbReference type="CDD" id="cd01803">
    <property type="entry name" value="Ubl_ubiquitin"/>
    <property type="match status" value="1"/>
</dbReference>
<dbReference type="FunFam" id="3.10.20.90:FF:000016">
    <property type="entry name" value="Polyubiquitin 3"/>
    <property type="match status" value="1"/>
</dbReference>
<dbReference type="Gene3D" id="3.10.20.90">
    <property type="entry name" value="Phosphatidylinositol 3-kinase Catalytic Subunit, Chain A, domain 1"/>
    <property type="match status" value="1"/>
</dbReference>
<dbReference type="InterPro" id="IPR000626">
    <property type="entry name" value="Ubiquitin-like_dom"/>
</dbReference>
<dbReference type="InterPro" id="IPR029071">
    <property type="entry name" value="Ubiquitin-like_domsf"/>
</dbReference>
<dbReference type="InterPro" id="IPR019954">
    <property type="entry name" value="Ubiquitin_CS"/>
</dbReference>
<dbReference type="InterPro" id="IPR019956">
    <property type="entry name" value="Ubiquitin_dom"/>
</dbReference>
<dbReference type="InterPro" id="IPR050158">
    <property type="entry name" value="Ubiquitin_ubiquitin-like"/>
</dbReference>
<dbReference type="PANTHER" id="PTHR10666">
    <property type="entry name" value="UBIQUITIN"/>
    <property type="match status" value="1"/>
</dbReference>
<dbReference type="Pfam" id="PF00240">
    <property type="entry name" value="ubiquitin"/>
    <property type="match status" value="1"/>
</dbReference>
<dbReference type="PRINTS" id="PR00348">
    <property type="entry name" value="UBIQUITIN"/>
</dbReference>
<dbReference type="SMART" id="SM00213">
    <property type="entry name" value="UBQ"/>
    <property type="match status" value="1"/>
</dbReference>
<dbReference type="SUPFAM" id="SSF54236">
    <property type="entry name" value="Ubiquitin-like"/>
    <property type="match status" value="1"/>
</dbReference>
<dbReference type="PROSITE" id="PS00299">
    <property type="entry name" value="UBIQUITIN_1"/>
    <property type="match status" value="1"/>
</dbReference>
<dbReference type="PROSITE" id="PS50053">
    <property type="entry name" value="UBIQUITIN_2"/>
    <property type="match status" value="1"/>
</dbReference>
<organism>
    <name type="scientific">Avena sativa</name>
    <name type="common">Oat</name>
    <dbReference type="NCBI Taxonomy" id="4498"/>
    <lineage>
        <taxon>Eukaryota</taxon>
        <taxon>Viridiplantae</taxon>
        <taxon>Streptophyta</taxon>
        <taxon>Embryophyta</taxon>
        <taxon>Tracheophyta</taxon>
        <taxon>Spermatophyta</taxon>
        <taxon>Magnoliopsida</taxon>
        <taxon>Liliopsida</taxon>
        <taxon>Poales</taxon>
        <taxon>Poaceae</taxon>
        <taxon>BOP clade</taxon>
        <taxon>Pooideae</taxon>
        <taxon>Poodae</taxon>
        <taxon>Poeae</taxon>
        <taxon>Poeae Chloroplast Group 1 (Aveneae type)</taxon>
        <taxon>Aveninae</taxon>
        <taxon>Avena</taxon>
    </lineage>
</organism>
<feature type="chain" id="PRO_0000114835" description="Ubiquitin">
    <location>
        <begin position="1"/>
        <end position="76"/>
    </location>
</feature>
<feature type="domain" description="Ubiquitin-like" evidence="2">
    <location>
        <begin position="1"/>
        <end position="76"/>
    </location>
</feature>
<feature type="cross-link" description="Glycyl lysine isopeptide (Lys-Gly) (interchain with G-Cter in ubiquitin)">
    <location>
        <position position="48"/>
    </location>
</feature>
<feature type="cross-link" description="Glycyl lysine isopeptide (Gly-Lys) (interchain with K-? in acceptor proteins)">
    <location>
        <position position="76"/>
    </location>
</feature>
<name>UBIQ_AVESA</name>
<comment type="function">
    <text evidence="1">Ubiquitin exists either covalently attached to another protein, or free (unanchored). When covalently bound, it is conjugated to target proteins via an isopeptide bond either as a monomer (monoubiquitin), a polymer linked via different Lys residues of the ubiquitin (polyubiquitin chains) or a linear polymer linked via the initiator Met of the ubiquitin (linear polyubiquitin chains). Polyubiquitin chains, when attached to a target protein, have different functions depending on the Lys residue of the ubiquitin that is linked: Lys-48-linked is involved in protein degradation via the proteasome. Linear polymer chains formed via attachment by the initiator Met lead to cell signaling. Ubiquitin is usually conjugated to Lys residues of target proteins, however, in rare cases, conjugation to Cys or Ser residues has been observed. When polyubiquitin is free (unanchored-polyubiquitin), it also has distinct roles, such as in activation of protein kinases, and in signaling (By similarity).</text>
</comment>
<comment type="subcellular location">
    <subcellularLocation>
        <location evidence="1">Cytoplasm</location>
    </subcellularLocation>
    <subcellularLocation>
        <location evidence="1">Nucleus</location>
    </subcellularLocation>
</comment>
<comment type="similarity">
    <text evidence="3">Belongs to the ubiquitin family.</text>
</comment>